<accession>C1L1M8</accession>
<name>NAGB_LISMC</name>
<gene>
    <name evidence="1" type="primary">nagB</name>
    <name type="ordered locus">Lm4b_00977</name>
</gene>
<keyword id="KW-0119">Carbohydrate metabolism</keyword>
<keyword id="KW-0378">Hydrolase</keyword>
<feature type="chain" id="PRO_1000214086" description="Glucosamine-6-phosphate deaminase">
    <location>
        <begin position="1"/>
        <end position="234"/>
    </location>
</feature>
<feature type="active site" description="Proton acceptor; for enolization step" evidence="1">
    <location>
        <position position="63"/>
    </location>
</feature>
<feature type="active site" description="For ring-opening step" evidence="1">
    <location>
        <position position="129"/>
    </location>
</feature>
<feature type="active site" description="Proton acceptor; for ring-opening step" evidence="1">
    <location>
        <position position="131"/>
    </location>
</feature>
<feature type="active site" description="For ring-opening step" evidence="1">
    <location>
        <position position="136"/>
    </location>
</feature>
<organism>
    <name type="scientific">Listeria monocytogenes serotype 4b (strain CLIP80459)</name>
    <dbReference type="NCBI Taxonomy" id="568819"/>
    <lineage>
        <taxon>Bacteria</taxon>
        <taxon>Bacillati</taxon>
        <taxon>Bacillota</taxon>
        <taxon>Bacilli</taxon>
        <taxon>Bacillales</taxon>
        <taxon>Listeriaceae</taxon>
        <taxon>Listeria</taxon>
    </lineage>
</organism>
<sequence>MQLITTENKLAGSKKALEIIEKGITSGEVNTLGLATGSTPETLYAELVKSDVDTKNVTTTNLDEYVGLAANDPNSYHYYMNELLFSKKAFKESFLPNGEATDAEAECARYEEILSEHPIDIQVLGIGTNGHIGFNEPGTPFDSLTHKVVLTDSTREANKRFFEREEDVPTHAYSMGIKSIMNAKKIILLAFGENKAQAIKETIKGPVDVNCPASVLQNHPDVTVILDNEAASLL</sequence>
<protein>
    <recommendedName>
        <fullName evidence="1">Glucosamine-6-phosphate deaminase</fullName>
        <ecNumber evidence="1">3.5.99.6</ecNumber>
    </recommendedName>
    <alternativeName>
        <fullName evidence="1">GlcN6P deaminase</fullName>
        <shortName evidence="1">GNPDA</shortName>
    </alternativeName>
    <alternativeName>
        <fullName evidence="1">Glucosamine-6-phosphate isomerase</fullName>
    </alternativeName>
</protein>
<proteinExistence type="inferred from homology"/>
<evidence type="ECO:0000255" key="1">
    <source>
        <dbReference type="HAMAP-Rule" id="MF_01241"/>
    </source>
</evidence>
<comment type="function">
    <text evidence="1">Catalyzes the reversible isomerization-deamination of glucosamine 6-phosphate (GlcN6P) to form fructose 6-phosphate (Fru6P) and ammonium ion.</text>
</comment>
<comment type="catalytic activity">
    <reaction evidence="1">
        <text>alpha-D-glucosamine 6-phosphate + H2O = beta-D-fructose 6-phosphate + NH4(+)</text>
        <dbReference type="Rhea" id="RHEA:12172"/>
        <dbReference type="ChEBI" id="CHEBI:15377"/>
        <dbReference type="ChEBI" id="CHEBI:28938"/>
        <dbReference type="ChEBI" id="CHEBI:57634"/>
        <dbReference type="ChEBI" id="CHEBI:75989"/>
        <dbReference type="EC" id="3.5.99.6"/>
    </reaction>
</comment>
<comment type="pathway">
    <text evidence="1">Amino-sugar metabolism; N-acetylneuraminate degradation; D-fructose 6-phosphate from N-acetylneuraminate: step 5/5.</text>
</comment>
<comment type="similarity">
    <text evidence="1">Belongs to the glucosamine/galactosamine-6-phosphate isomerase family. NagB subfamily.</text>
</comment>
<reference key="1">
    <citation type="journal article" date="2012" name="BMC Genomics">
        <title>Comparative genomics and transcriptomics of lineages I, II, and III strains of Listeria monocytogenes.</title>
        <authorList>
            <person name="Hain T."/>
            <person name="Ghai R."/>
            <person name="Billion A."/>
            <person name="Kuenne C.T."/>
            <person name="Steinweg C."/>
            <person name="Izar B."/>
            <person name="Mohamed W."/>
            <person name="Mraheil M."/>
            <person name="Domann E."/>
            <person name="Schaffrath S."/>
            <person name="Karst U."/>
            <person name="Goesmann A."/>
            <person name="Oehm S."/>
            <person name="Puhler A."/>
            <person name="Merkl R."/>
            <person name="Vorwerk S."/>
            <person name="Glaser P."/>
            <person name="Garrido P."/>
            <person name="Rusniok C."/>
            <person name="Buchrieser C."/>
            <person name="Goebel W."/>
            <person name="Chakraborty T."/>
        </authorList>
    </citation>
    <scope>NUCLEOTIDE SEQUENCE [LARGE SCALE GENOMIC DNA]</scope>
    <source>
        <strain>CLIP80459</strain>
    </source>
</reference>
<dbReference type="EC" id="3.5.99.6" evidence="1"/>
<dbReference type="EMBL" id="FM242711">
    <property type="protein sequence ID" value="CAS04743.1"/>
    <property type="molecule type" value="Genomic_DNA"/>
</dbReference>
<dbReference type="RefSeq" id="WP_003727073.1">
    <property type="nucleotide sequence ID" value="NC_012488.1"/>
</dbReference>
<dbReference type="SMR" id="C1L1M8"/>
<dbReference type="KEGG" id="lmc:Lm4b_00977"/>
<dbReference type="HOGENOM" id="CLU_049611_1_0_9"/>
<dbReference type="UniPathway" id="UPA00629">
    <property type="reaction ID" value="UER00684"/>
</dbReference>
<dbReference type="GO" id="GO:0005737">
    <property type="term" value="C:cytoplasm"/>
    <property type="evidence" value="ECO:0007669"/>
    <property type="project" value="TreeGrafter"/>
</dbReference>
<dbReference type="GO" id="GO:0004342">
    <property type="term" value="F:glucosamine-6-phosphate deaminase activity"/>
    <property type="evidence" value="ECO:0007669"/>
    <property type="project" value="UniProtKB-UniRule"/>
</dbReference>
<dbReference type="GO" id="GO:0042802">
    <property type="term" value="F:identical protein binding"/>
    <property type="evidence" value="ECO:0007669"/>
    <property type="project" value="TreeGrafter"/>
</dbReference>
<dbReference type="GO" id="GO:0005975">
    <property type="term" value="P:carbohydrate metabolic process"/>
    <property type="evidence" value="ECO:0007669"/>
    <property type="project" value="InterPro"/>
</dbReference>
<dbReference type="GO" id="GO:0006043">
    <property type="term" value="P:glucosamine catabolic process"/>
    <property type="evidence" value="ECO:0007669"/>
    <property type="project" value="TreeGrafter"/>
</dbReference>
<dbReference type="GO" id="GO:0006046">
    <property type="term" value="P:N-acetylglucosamine catabolic process"/>
    <property type="evidence" value="ECO:0007669"/>
    <property type="project" value="TreeGrafter"/>
</dbReference>
<dbReference type="GO" id="GO:0019262">
    <property type="term" value="P:N-acetylneuraminate catabolic process"/>
    <property type="evidence" value="ECO:0007669"/>
    <property type="project" value="UniProtKB-UniRule"/>
</dbReference>
<dbReference type="CDD" id="cd01399">
    <property type="entry name" value="GlcN6P_deaminase"/>
    <property type="match status" value="1"/>
</dbReference>
<dbReference type="FunFam" id="3.40.50.1360:FF:000003">
    <property type="entry name" value="Glucosamine-6-phosphate deaminase"/>
    <property type="match status" value="1"/>
</dbReference>
<dbReference type="Gene3D" id="3.40.50.1360">
    <property type="match status" value="1"/>
</dbReference>
<dbReference type="HAMAP" id="MF_01241">
    <property type="entry name" value="GlcN6P_deamin"/>
    <property type="match status" value="1"/>
</dbReference>
<dbReference type="InterPro" id="IPR006148">
    <property type="entry name" value="Glc/Gal-6P_isomerase"/>
</dbReference>
<dbReference type="InterPro" id="IPR004547">
    <property type="entry name" value="Glucosamine6P_isomerase"/>
</dbReference>
<dbReference type="InterPro" id="IPR018321">
    <property type="entry name" value="Glucosamine6P_isomerase_CS"/>
</dbReference>
<dbReference type="InterPro" id="IPR037171">
    <property type="entry name" value="NagB/RpiA_transferase-like"/>
</dbReference>
<dbReference type="PANTHER" id="PTHR11280">
    <property type="entry name" value="GLUCOSAMINE-6-PHOSPHATE ISOMERASE"/>
    <property type="match status" value="1"/>
</dbReference>
<dbReference type="PANTHER" id="PTHR11280:SF5">
    <property type="entry name" value="GLUCOSAMINE-6-PHOSPHATE ISOMERASE"/>
    <property type="match status" value="1"/>
</dbReference>
<dbReference type="Pfam" id="PF01182">
    <property type="entry name" value="Glucosamine_iso"/>
    <property type="match status" value="1"/>
</dbReference>
<dbReference type="SUPFAM" id="SSF100950">
    <property type="entry name" value="NagB/RpiA/CoA transferase-like"/>
    <property type="match status" value="1"/>
</dbReference>
<dbReference type="PROSITE" id="PS01161">
    <property type="entry name" value="GLC_GALNAC_ISOMERASE"/>
    <property type="match status" value="1"/>
</dbReference>